<feature type="chain" id="PRO_0000177185" description="Large ribosomal subunit protein bL20">
    <location>
        <begin position="1"/>
        <end position="131"/>
    </location>
</feature>
<accession>Q740J6</accession>
<reference key="1">
    <citation type="journal article" date="2005" name="Proc. Natl. Acad. Sci. U.S.A.">
        <title>The complete genome sequence of Mycobacterium avium subspecies paratuberculosis.</title>
        <authorList>
            <person name="Li L."/>
            <person name="Bannantine J.P."/>
            <person name="Zhang Q."/>
            <person name="Amonsin A."/>
            <person name="May B.J."/>
            <person name="Alt D."/>
            <person name="Banerji N."/>
            <person name="Kanjilal S."/>
            <person name="Kapur V."/>
        </authorList>
    </citation>
    <scope>NUCLEOTIDE SEQUENCE [LARGE SCALE GENOMIC DNA]</scope>
    <source>
        <strain>ATCC BAA-968 / K-10</strain>
    </source>
</reference>
<sequence length="131" mass="14659">MARVKRAVNAHKKRRSILKASKGYRGQRSRLYRKAKEQQLHSLNYAYRDRRARKGEFRKLWISRINAAARANDITYNRLIQGLKAAGVEVDRKNLADIAIADPAAFTALVDVARAALPEDVNAPSDSGEAA</sequence>
<organism>
    <name type="scientific">Mycolicibacterium paratuberculosis (strain ATCC BAA-968 / K-10)</name>
    <name type="common">Mycobacterium paratuberculosis</name>
    <dbReference type="NCBI Taxonomy" id="262316"/>
    <lineage>
        <taxon>Bacteria</taxon>
        <taxon>Bacillati</taxon>
        <taxon>Actinomycetota</taxon>
        <taxon>Actinomycetes</taxon>
        <taxon>Mycobacteriales</taxon>
        <taxon>Mycobacteriaceae</taxon>
        <taxon>Mycobacterium</taxon>
        <taxon>Mycobacterium avium complex (MAC)</taxon>
    </lineage>
</organism>
<protein>
    <recommendedName>
        <fullName evidence="1">Large ribosomal subunit protein bL20</fullName>
    </recommendedName>
    <alternativeName>
        <fullName evidence="2">50S ribosomal protein L20</fullName>
    </alternativeName>
</protein>
<keyword id="KW-1185">Reference proteome</keyword>
<keyword id="KW-0687">Ribonucleoprotein</keyword>
<keyword id="KW-0689">Ribosomal protein</keyword>
<keyword id="KW-0694">RNA-binding</keyword>
<keyword id="KW-0699">rRNA-binding</keyword>
<proteinExistence type="inferred from homology"/>
<dbReference type="EMBL" id="AE016958">
    <property type="protein sequence ID" value="AAS03671.1"/>
    <property type="molecule type" value="Genomic_DNA"/>
</dbReference>
<dbReference type="RefSeq" id="WP_003876268.1">
    <property type="nucleotide sequence ID" value="NZ_CP106873.1"/>
</dbReference>
<dbReference type="SMR" id="Q740J6"/>
<dbReference type="STRING" id="262316.MAP_1354"/>
<dbReference type="GeneID" id="75270527"/>
<dbReference type="KEGG" id="mpa:MAP_1354"/>
<dbReference type="eggNOG" id="COG0292">
    <property type="taxonomic scope" value="Bacteria"/>
</dbReference>
<dbReference type="HOGENOM" id="CLU_123265_0_0_11"/>
<dbReference type="Proteomes" id="UP000000580">
    <property type="component" value="Chromosome"/>
</dbReference>
<dbReference type="GO" id="GO:1990904">
    <property type="term" value="C:ribonucleoprotein complex"/>
    <property type="evidence" value="ECO:0007669"/>
    <property type="project" value="UniProtKB-KW"/>
</dbReference>
<dbReference type="GO" id="GO:0005840">
    <property type="term" value="C:ribosome"/>
    <property type="evidence" value="ECO:0007669"/>
    <property type="project" value="UniProtKB-KW"/>
</dbReference>
<dbReference type="GO" id="GO:0019843">
    <property type="term" value="F:rRNA binding"/>
    <property type="evidence" value="ECO:0007669"/>
    <property type="project" value="UniProtKB-UniRule"/>
</dbReference>
<dbReference type="GO" id="GO:0003735">
    <property type="term" value="F:structural constituent of ribosome"/>
    <property type="evidence" value="ECO:0007669"/>
    <property type="project" value="InterPro"/>
</dbReference>
<dbReference type="GO" id="GO:0000027">
    <property type="term" value="P:ribosomal large subunit assembly"/>
    <property type="evidence" value="ECO:0007669"/>
    <property type="project" value="UniProtKB-UniRule"/>
</dbReference>
<dbReference type="GO" id="GO:0006412">
    <property type="term" value="P:translation"/>
    <property type="evidence" value="ECO:0007669"/>
    <property type="project" value="InterPro"/>
</dbReference>
<dbReference type="CDD" id="cd07026">
    <property type="entry name" value="Ribosomal_L20"/>
    <property type="match status" value="1"/>
</dbReference>
<dbReference type="FunFam" id="1.10.1900.20:FF:000001">
    <property type="entry name" value="50S ribosomal protein L20"/>
    <property type="match status" value="1"/>
</dbReference>
<dbReference type="Gene3D" id="6.10.160.10">
    <property type="match status" value="1"/>
</dbReference>
<dbReference type="Gene3D" id="1.10.1900.20">
    <property type="entry name" value="Ribosomal protein L20"/>
    <property type="match status" value="1"/>
</dbReference>
<dbReference type="HAMAP" id="MF_00382">
    <property type="entry name" value="Ribosomal_bL20"/>
    <property type="match status" value="1"/>
</dbReference>
<dbReference type="InterPro" id="IPR005813">
    <property type="entry name" value="Ribosomal_bL20"/>
</dbReference>
<dbReference type="InterPro" id="IPR049946">
    <property type="entry name" value="RIBOSOMAL_L20_CS"/>
</dbReference>
<dbReference type="InterPro" id="IPR035566">
    <property type="entry name" value="Ribosomal_protein_bL20_C"/>
</dbReference>
<dbReference type="NCBIfam" id="TIGR01032">
    <property type="entry name" value="rplT_bact"/>
    <property type="match status" value="1"/>
</dbReference>
<dbReference type="PANTHER" id="PTHR10986">
    <property type="entry name" value="39S RIBOSOMAL PROTEIN L20"/>
    <property type="match status" value="1"/>
</dbReference>
<dbReference type="Pfam" id="PF00453">
    <property type="entry name" value="Ribosomal_L20"/>
    <property type="match status" value="1"/>
</dbReference>
<dbReference type="PRINTS" id="PR00062">
    <property type="entry name" value="RIBOSOMALL20"/>
</dbReference>
<dbReference type="SUPFAM" id="SSF74731">
    <property type="entry name" value="Ribosomal protein L20"/>
    <property type="match status" value="1"/>
</dbReference>
<dbReference type="PROSITE" id="PS00937">
    <property type="entry name" value="RIBOSOMAL_L20"/>
    <property type="match status" value="1"/>
</dbReference>
<gene>
    <name evidence="1" type="primary">rplT</name>
    <name type="ordered locus">MAP_1354</name>
</gene>
<name>RL20_MYCPA</name>
<comment type="function">
    <text evidence="1">Binds directly to 23S ribosomal RNA and is necessary for the in vitro assembly process of the 50S ribosomal subunit. It is not involved in the protein synthesizing functions of that subunit.</text>
</comment>
<comment type="similarity">
    <text evidence="1">Belongs to the bacterial ribosomal protein bL20 family.</text>
</comment>
<evidence type="ECO:0000255" key="1">
    <source>
        <dbReference type="HAMAP-Rule" id="MF_00382"/>
    </source>
</evidence>
<evidence type="ECO:0000305" key="2"/>